<proteinExistence type="evidence at protein level"/>
<name>KU70_SCHPO</name>
<feature type="chain" id="PRO_0000255455" description="ATP-dependent DNA helicase II subunit 1">
    <location>
        <begin position="1"/>
        <end position="607"/>
    </location>
</feature>
<feature type="domain" description="Ku">
    <location>
        <begin position="241"/>
        <end position="452"/>
    </location>
</feature>
<feature type="domain" description="SAP" evidence="2">
    <location>
        <begin position="570"/>
        <end position="604"/>
    </location>
</feature>
<comment type="function">
    <text evidence="1 3 4">Single-stranded DNA-dependent ATP-dependent helicase. Involved in non-homologous end joining (NHEJ) DNA double strand break repair. DNA-binding is sequence-independent but has a high affinity to nicks in double-stranded DNA and to the ends of duplex DNA. Binds to naturally occurring chromosomal ends, and therefore provides chromosomal end protection. Required also for telomere recombination to repair telomeric ends in the absence of telomerase. ku70, of the ku70/ku80 heterodimer, binds to the stem loop of tlc1, the RNA component of telomerase. Required for mating-type switching (By similarity). Involved in telomere maintenance. Interacts with telomeric repeats and subtelomeric sequences thereby controlling telomere length and protecting against subtelomeric rearrangement. Maintains telomeric chromatin, which is involved in silencing the expression of genes located at the telomere.</text>
</comment>
<comment type="catalytic activity">
    <reaction>
        <text>ATP + H2O = ADP + phosphate + H(+)</text>
        <dbReference type="Rhea" id="RHEA:13065"/>
        <dbReference type="ChEBI" id="CHEBI:15377"/>
        <dbReference type="ChEBI" id="CHEBI:15378"/>
        <dbReference type="ChEBI" id="CHEBI:30616"/>
        <dbReference type="ChEBI" id="CHEBI:43474"/>
        <dbReference type="ChEBI" id="CHEBI:456216"/>
        <dbReference type="EC" id="3.6.4.12"/>
    </reaction>
</comment>
<comment type="subunit">
    <text>Heterodimer of pku70 and pku80.</text>
</comment>
<comment type="subcellular location">
    <subcellularLocation>
        <location evidence="5">Nucleus</location>
    </subcellularLocation>
    <subcellularLocation>
        <location evidence="4">Chromosome</location>
        <location evidence="4">Telomere</location>
    </subcellularLocation>
</comment>
<comment type="similarity">
    <text evidence="5">Belongs to the ku70 family.</text>
</comment>
<organism>
    <name type="scientific">Schizosaccharomyces pombe (strain 972 / ATCC 24843)</name>
    <name type="common">Fission yeast</name>
    <dbReference type="NCBI Taxonomy" id="284812"/>
    <lineage>
        <taxon>Eukaryota</taxon>
        <taxon>Fungi</taxon>
        <taxon>Dikarya</taxon>
        <taxon>Ascomycota</taxon>
        <taxon>Taphrinomycotina</taxon>
        <taxon>Schizosaccharomycetes</taxon>
        <taxon>Schizosaccharomycetales</taxon>
        <taxon>Schizosaccharomycetaceae</taxon>
        <taxon>Schizosaccharomyces</taxon>
    </lineage>
</organism>
<protein>
    <recommendedName>
        <fullName>ATP-dependent DNA helicase II subunit 1</fullName>
        <ecNumber>3.6.4.12</ecNumber>
    </recommendedName>
    <alternativeName>
        <fullName>ATP-dependent DNA helicase II subunit Ku70</fullName>
    </alternativeName>
</protein>
<keyword id="KW-0067">ATP-binding</keyword>
<keyword id="KW-0158">Chromosome</keyword>
<keyword id="KW-0227">DNA damage</keyword>
<keyword id="KW-0233">DNA recombination</keyword>
<keyword id="KW-0234">DNA repair</keyword>
<keyword id="KW-0238">DNA-binding</keyword>
<keyword id="KW-0347">Helicase</keyword>
<keyword id="KW-0378">Hydrolase</keyword>
<keyword id="KW-0547">Nucleotide-binding</keyword>
<keyword id="KW-0539">Nucleus</keyword>
<keyword id="KW-1185">Reference proteome</keyword>
<keyword id="KW-0779">Telomere</keyword>
<reference key="1">
    <citation type="journal article" date="2002" name="Nature">
        <title>The genome sequence of Schizosaccharomyces pombe.</title>
        <authorList>
            <person name="Wood V."/>
            <person name="Gwilliam R."/>
            <person name="Rajandream M.A."/>
            <person name="Lyne M.H."/>
            <person name="Lyne R."/>
            <person name="Stewart A."/>
            <person name="Sgouros J.G."/>
            <person name="Peat N."/>
            <person name="Hayles J."/>
            <person name="Baker S.G."/>
            <person name="Basham D."/>
            <person name="Bowman S."/>
            <person name="Brooks K."/>
            <person name="Brown D."/>
            <person name="Brown S."/>
            <person name="Chillingworth T."/>
            <person name="Churcher C.M."/>
            <person name="Collins M."/>
            <person name="Connor R."/>
            <person name="Cronin A."/>
            <person name="Davis P."/>
            <person name="Feltwell T."/>
            <person name="Fraser A."/>
            <person name="Gentles S."/>
            <person name="Goble A."/>
            <person name="Hamlin N."/>
            <person name="Harris D.E."/>
            <person name="Hidalgo J."/>
            <person name="Hodgson G."/>
            <person name="Holroyd S."/>
            <person name="Hornsby T."/>
            <person name="Howarth S."/>
            <person name="Huckle E.J."/>
            <person name="Hunt S."/>
            <person name="Jagels K."/>
            <person name="James K.D."/>
            <person name="Jones L."/>
            <person name="Jones M."/>
            <person name="Leather S."/>
            <person name="McDonald S."/>
            <person name="McLean J."/>
            <person name="Mooney P."/>
            <person name="Moule S."/>
            <person name="Mungall K.L."/>
            <person name="Murphy L.D."/>
            <person name="Niblett D."/>
            <person name="Odell C."/>
            <person name="Oliver K."/>
            <person name="O'Neil S."/>
            <person name="Pearson D."/>
            <person name="Quail M.A."/>
            <person name="Rabbinowitsch E."/>
            <person name="Rutherford K.M."/>
            <person name="Rutter S."/>
            <person name="Saunders D."/>
            <person name="Seeger K."/>
            <person name="Sharp S."/>
            <person name="Skelton J."/>
            <person name="Simmonds M.N."/>
            <person name="Squares R."/>
            <person name="Squares S."/>
            <person name="Stevens K."/>
            <person name="Taylor K."/>
            <person name="Taylor R.G."/>
            <person name="Tivey A."/>
            <person name="Walsh S.V."/>
            <person name="Warren T."/>
            <person name="Whitehead S."/>
            <person name="Woodward J.R."/>
            <person name="Volckaert G."/>
            <person name="Aert R."/>
            <person name="Robben J."/>
            <person name="Grymonprez B."/>
            <person name="Weltjens I."/>
            <person name="Vanstreels E."/>
            <person name="Rieger M."/>
            <person name="Schaefer M."/>
            <person name="Mueller-Auer S."/>
            <person name="Gabel C."/>
            <person name="Fuchs M."/>
            <person name="Duesterhoeft A."/>
            <person name="Fritzc C."/>
            <person name="Holzer E."/>
            <person name="Moestl D."/>
            <person name="Hilbert H."/>
            <person name="Borzym K."/>
            <person name="Langer I."/>
            <person name="Beck A."/>
            <person name="Lehrach H."/>
            <person name="Reinhardt R."/>
            <person name="Pohl T.M."/>
            <person name="Eger P."/>
            <person name="Zimmermann W."/>
            <person name="Wedler H."/>
            <person name="Wambutt R."/>
            <person name="Purnelle B."/>
            <person name="Goffeau A."/>
            <person name="Cadieu E."/>
            <person name="Dreano S."/>
            <person name="Gloux S."/>
            <person name="Lelaure V."/>
            <person name="Mottier S."/>
            <person name="Galibert F."/>
            <person name="Aves S.J."/>
            <person name="Xiang Z."/>
            <person name="Hunt C."/>
            <person name="Moore K."/>
            <person name="Hurst S.M."/>
            <person name="Lucas M."/>
            <person name="Rochet M."/>
            <person name="Gaillardin C."/>
            <person name="Tallada V.A."/>
            <person name="Garzon A."/>
            <person name="Thode G."/>
            <person name="Daga R.R."/>
            <person name="Cruzado L."/>
            <person name="Jimenez J."/>
            <person name="Sanchez M."/>
            <person name="del Rey F."/>
            <person name="Benito J."/>
            <person name="Dominguez A."/>
            <person name="Revuelta J.L."/>
            <person name="Moreno S."/>
            <person name="Armstrong J."/>
            <person name="Forsburg S.L."/>
            <person name="Cerutti L."/>
            <person name="Lowe T."/>
            <person name="McCombie W.R."/>
            <person name="Paulsen I."/>
            <person name="Potashkin J."/>
            <person name="Shpakovski G.V."/>
            <person name="Ussery D."/>
            <person name="Barrell B.G."/>
            <person name="Nurse P."/>
        </authorList>
    </citation>
    <scope>NUCLEOTIDE SEQUENCE [LARGE SCALE GENOMIC DNA]</scope>
    <source>
        <strain>972 / ATCC 24843</strain>
    </source>
</reference>
<reference key="2">
    <citation type="journal article" date="2000" name="Mol. Biol. Cell">
        <title>Protection of telomeres by the Ku protein in fission yeast.</title>
        <authorList>
            <person name="Baumann P."/>
            <person name="Cech T.R."/>
        </authorList>
    </citation>
    <scope>FUNCTION IN TELOMERE MAINTENANCE</scope>
</reference>
<reference key="3">
    <citation type="journal article" date="2003" name="J. Biol. Chem.">
        <title>Telomeric DNA ends are essential for the localization of Ku at telomeres in fission yeast.</title>
        <authorList>
            <person name="Miyoshi T."/>
            <person name="Sadaie M."/>
            <person name="Kanoh J."/>
            <person name="Ishikawa F."/>
        </authorList>
    </citation>
    <scope>FUNCTION IN TELOMERE MAINTENANCE</scope>
    <scope>INTERACTION WITH PKU80</scope>
    <scope>SUBCELLULAR LOCATION</scope>
</reference>
<reference key="4">
    <citation type="journal article" date="2006" name="Nat. Biotechnol.">
        <title>ORFeome cloning and global analysis of protein localization in the fission yeast Schizosaccharomyces pombe.</title>
        <authorList>
            <person name="Matsuyama A."/>
            <person name="Arai R."/>
            <person name="Yashiroda Y."/>
            <person name="Shirai A."/>
            <person name="Kamata A."/>
            <person name="Sekido S."/>
            <person name="Kobayashi Y."/>
            <person name="Hashimoto A."/>
            <person name="Hamamoto M."/>
            <person name="Hiraoka Y."/>
            <person name="Horinouchi S."/>
            <person name="Yoshida M."/>
        </authorList>
    </citation>
    <scope>SUBCELLULAR LOCATION [LARGE SCALE ANALYSIS]</scope>
</reference>
<evidence type="ECO:0000250" key="1"/>
<evidence type="ECO:0000255" key="2">
    <source>
        <dbReference type="PROSITE-ProRule" id="PRU00186"/>
    </source>
</evidence>
<evidence type="ECO:0000269" key="3">
    <source>
    </source>
</evidence>
<evidence type="ECO:0000269" key="4">
    <source>
    </source>
</evidence>
<evidence type="ECO:0000305" key="5"/>
<sequence>MENDEQIDETENFAIGKYAILFVIEVSPSMLDPVDEFTPSSLQMALICAYQLAAQRVITNPSDIMGVLLYGTESSTGRFANQMMLLDIDPPDAERIKSLQSFEKDFQFSKEKFKPCSCQVSLSSVLYHCSVIFTTKAENFEKRLFLITDNDHPAWDATERDIILQRAKDLRDLDIQVHPVFLDPPTHSFRINIFYSDFLYIVYGRQDVSNLVNRGQAQLQHMLNMITALQKPKRAHFHLKMDLGNDVRIGVEAFILLKRLESAKTNWVYAKGERFAVAVPQSKQVSFATKKELKKDEIRRSYSYGGSSVVFGSDELNKVRSFEPPTLRIIGFRDFSTLKPWHCLKPAVFLRPKDDEIIGSGAVFSAIHKKLLASNKIGIAWFVSRPNANPCFVAMLATPGSIHIRDDFELPLGIFLVQLPTADDIRSLPPINPNPISMPSNLIETMQRILRGMELRSYQPGKYNNPSLQWHYKVLQALALDEEIPTDFVDNTLPKYKAIQKRVGEYMGDVNNIVAEYRNDISDKNGIKEEEEDQGPIVKKARIEKSGKPIFAEDDRLKQLYIEGVLDKEIKALKVSQLKDILRDRGLRVSGKKADLLDNLTNYVKKL</sequence>
<gene>
    <name type="primary">pku70</name>
    <name type="synonym">ku70</name>
    <name type="ORF">SPCC126.02c</name>
</gene>
<accession>O94395</accession>
<dbReference type="EC" id="3.6.4.12"/>
<dbReference type="EMBL" id="CU329672">
    <property type="protein sequence ID" value="CAA22471.1"/>
    <property type="molecule type" value="Genomic_DNA"/>
</dbReference>
<dbReference type="PIR" id="T40906">
    <property type="entry name" value="T40906"/>
</dbReference>
<dbReference type="RefSeq" id="NP_588445.1">
    <property type="nucleotide sequence ID" value="NM_001023436.2"/>
</dbReference>
<dbReference type="SMR" id="O94395"/>
<dbReference type="BioGRID" id="275662">
    <property type="interactions" value="34"/>
</dbReference>
<dbReference type="FunCoup" id="O94395">
    <property type="interactions" value="735"/>
</dbReference>
<dbReference type="STRING" id="284812.O94395"/>
<dbReference type="iPTMnet" id="O94395"/>
<dbReference type="PaxDb" id="4896-SPCC126.02c.1"/>
<dbReference type="EnsemblFungi" id="SPCC126.02c.1">
    <property type="protein sequence ID" value="SPCC126.02c.1:pep"/>
    <property type="gene ID" value="SPCC126.02c"/>
</dbReference>
<dbReference type="PomBase" id="SPCC126.02c">
    <property type="gene designation" value="pku70"/>
</dbReference>
<dbReference type="VEuPathDB" id="FungiDB:SPCC126.02c"/>
<dbReference type="eggNOG" id="KOG2327">
    <property type="taxonomic scope" value="Eukaryota"/>
</dbReference>
<dbReference type="HOGENOM" id="CLU_014815_3_0_1"/>
<dbReference type="InParanoid" id="O94395"/>
<dbReference type="OMA" id="FWANVKH"/>
<dbReference type="PhylomeDB" id="O94395"/>
<dbReference type="Reactome" id="R-SPO-6798695">
    <property type="pathway name" value="Neutrophil degranulation"/>
</dbReference>
<dbReference type="PRO" id="PR:O94395"/>
<dbReference type="Proteomes" id="UP000002485">
    <property type="component" value="Chromosome III"/>
</dbReference>
<dbReference type="GO" id="GO:0099115">
    <property type="term" value="C:chromosome, subtelomeric region"/>
    <property type="evidence" value="ECO:0000314"/>
    <property type="project" value="PomBase"/>
</dbReference>
<dbReference type="GO" id="GO:0140445">
    <property type="term" value="C:chromosome, telomeric repeat region"/>
    <property type="evidence" value="ECO:0000314"/>
    <property type="project" value="PomBase"/>
</dbReference>
<dbReference type="GO" id="GO:0000792">
    <property type="term" value="C:heterochromatin"/>
    <property type="evidence" value="ECO:0000314"/>
    <property type="project" value="PomBase"/>
</dbReference>
<dbReference type="GO" id="GO:0043564">
    <property type="term" value="C:Ku70:Ku80 complex"/>
    <property type="evidence" value="ECO:0000318"/>
    <property type="project" value="GO_Central"/>
</dbReference>
<dbReference type="GO" id="GO:0005634">
    <property type="term" value="C:nucleus"/>
    <property type="evidence" value="ECO:0000314"/>
    <property type="project" value="PomBase"/>
</dbReference>
<dbReference type="GO" id="GO:0005721">
    <property type="term" value="C:pericentric heterochromatin"/>
    <property type="evidence" value="ECO:0000314"/>
    <property type="project" value="PomBase"/>
</dbReference>
<dbReference type="GO" id="GO:0035861">
    <property type="term" value="C:site of double-strand break"/>
    <property type="evidence" value="ECO:0000314"/>
    <property type="project" value="PomBase"/>
</dbReference>
<dbReference type="GO" id="GO:0043138">
    <property type="term" value="F:3'-5' DNA helicase activity"/>
    <property type="evidence" value="ECO:0000250"/>
    <property type="project" value="PomBase"/>
</dbReference>
<dbReference type="GO" id="GO:0005524">
    <property type="term" value="F:ATP binding"/>
    <property type="evidence" value="ECO:0007669"/>
    <property type="project" value="UniProtKB-KW"/>
</dbReference>
<dbReference type="GO" id="GO:0016887">
    <property type="term" value="F:ATP hydrolysis activity"/>
    <property type="evidence" value="ECO:0007669"/>
    <property type="project" value="RHEA"/>
</dbReference>
<dbReference type="GO" id="GO:0003684">
    <property type="term" value="F:damaged DNA binding"/>
    <property type="evidence" value="ECO:0007669"/>
    <property type="project" value="InterPro"/>
</dbReference>
<dbReference type="GO" id="GO:0042162">
    <property type="term" value="F:telomeric DNA binding"/>
    <property type="evidence" value="ECO:0000314"/>
    <property type="project" value="PomBase"/>
</dbReference>
<dbReference type="GO" id="GO:0006310">
    <property type="term" value="P:DNA recombination"/>
    <property type="evidence" value="ECO:0007669"/>
    <property type="project" value="UniProtKB-KW"/>
</dbReference>
<dbReference type="GO" id="GO:0006303">
    <property type="term" value="P:double-strand break repair via nonhomologous end joining"/>
    <property type="evidence" value="ECO:0000315"/>
    <property type="project" value="PomBase"/>
</dbReference>
<dbReference type="GO" id="GO:0031297">
    <property type="term" value="P:replication fork processing"/>
    <property type="evidence" value="ECO:0000315"/>
    <property type="project" value="PomBase"/>
</dbReference>
<dbReference type="GO" id="GO:0120290">
    <property type="term" value="P:stalled replication fork localization to nuclear periphery"/>
    <property type="evidence" value="ECO:0000315"/>
    <property type="project" value="PomBase"/>
</dbReference>
<dbReference type="GO" id="GO:0000723">
    <property type="term" value="P:telomere maintenance"/>
    <property type="evidence" value="ECO:0000315"/>
    <property type="project" value="PomBase"/>
</dbReference>
<dbReference type="CDD" id="cd00788">
    <property type="entry name" value="KU70"/>
    <property type="match status" value="1"/>
</dbReference>
<dbReference type="CDD" id="cd01458">
    <property type="entry name" value="vWA_ku"/>
    <property type="match status" value="1"/>
</dbReference>
<dbReference type="Gene3D" id="1.10.1600.10">
    <property type="match status" value="1"/>
</dbReference>
<dbReference type="Gene3D" id="2.40.290.10">
    <property type="match status" value="1"/>
</dbReference>
<dbReference type="Gene3D" id="4.10.970.10">
    <property type="entry name" value="Ku70, bridge and pillars"/>
    <property type="match status" value="1"/>
</dbReference>
<dbReference type="Gene3D" id="1.10.720.30">
    <property type="entry name" value="SAP domain"/>
    <property type="match status" value="1"/>
</dbReference>
<dbReference type="Gene3D" id="3.40.50.410">
    <property type="entry name" value="von Willebrand factor, type A domain"/>
    <property type="match status" value="1"/>
</dbReference>
<dbReference type="InterPro" id="IPR006165">
    <property type="entry name" value="Ku70"/>
</dbReference>
<dbReference type="InterPro" id="IPR006164">
    <property type="entry name" value="Ku70/Ku80_beta-barrel_dom"/>
</dbReference>
<dbReference type="InterPro" id="IPR027388">
    <property type="entry name" value="Ku70_bridge/pillars_dom_sf"/>
</dbReference>
<dbReference type="InterPro" id="IPR047087">
    <property type="entry name" value="KU70_core_dom"/>
</dbReference>
<dbReference type="InterPro" id="IPR005160">
    <property type="entry name" value="Ku_C"/>
</dbReference>
<dbReference type="InterPro" id="IPR005161">
    <property type="entry name" value="Ku_N"/>
</dbReference>
<dbReference type="InterPro" id="IPR003034">
    <property type="entry name" value="SAP_dom"/>
</dbReference>
<dbReference type="InterPro" id="IPR036361">
    <property type="entry name" value="SAP_dom_sf"/>
</dbReference>
<dbReference type="InterPro" id="IPR016194">
    <property type="entry name" value="SPOC-like_C_dom_sf"/>
</dbReference>
<dbReference type="InterPro" id="IPR036465">
    <property type="entry name" value="vWFA_dom_sf"/>
</dbReference>
<dbReference type="NCBIfam" id="TIGR00578">
    <property type="entry name" value="ku70"/>
    <property type="match status" value="1"/>
</dbReference>
<dbReference type="PANTHER" id="PTHR12604">
    <property type="entry name" value="KU AUTOANTIGEN DNA HELICASE"/>
    <property type="match status" value="1"/>
</dbReference>
<dbReference type="PANTHER" id="PTHR12604:SF2">
    <property type="entry name" value="X-RAY REPAIR CROSS-COMPLEMENTING PROTEIN 6"/>
    <property type="match status" value="1"/>
</dbReference>
<dbReference type="Pfam" id="PF02735">
    <property type="entry name" value="Ku"/>
    <property type="match status" value="1"/>
</dbReference>
<dbReference type="Pfam" id="PF03730">
    <property type="entry name" value="Ku_C"/>
    <property type="match status" value="1"/>
</dbReference>
<dbReference type="Pfam" id="PF03731">
    <property type="entry name" value="Ku_N"/>
    <property type="match status" value="1"/>
</dbReference>
<dbReference type="Pfam" id="PF02037">
    <property type="entry name" value="SAP"/>
    <property type="match status" value="1"/>
</dbReference>
<dbReference type="PIRSF" id="PIRSF003033">
    <property type="entry name" value="Ku70"/>
    <property type="match status" value="1"/>
</dbReference>
<dbReference type="SMART" id="SM00559">
    <property type="entry name" value="Ku78"/>
    <property type="match status" value="1"/>
</dbReference>
<dbReference type="SMART" id="SM00513">
    <property type="entry name" value="SAP"/>
    <property type="match status" value="1"/>
</dbReference>
<dbReference type="SUPFAM" id="SSF68906">
    <property type="entry name" value="SAP domain"/>
    <property type="match status" value="1"/>
</dbReference>
<dbReference type="SUPFAM" id="SSF100939">
    <property type="entry name" value="SPOC domain-like"/>
    <property type="match status" value="1"/>
</dbReference>
<dbReference type="SUPFAM" id="SSF53300">
    <property type="entry name" value="vWA-like"/>
    <property type="match status" value="1"/>
</dbReference>
<dbReference type="PROSITE" id="PS50800">
    <property type="entry name" value="SAP"/>
    <property type="match status" value="1"/>
</dbReference>